<feature type="chain" id="PRO_1000011680" description="GTPase Der">
    <location>
        <begin position="1"/>
        <end position="462"/>
    </location>
</feature>
<feature type="domain" description="EngA-type G 1">
    <location>
        <begin position="2"/>
        <end position="164"/>
    </location>
</feature>
<feature type="domain" description="EngA-type G 2">
    <location>
        <begin position="195"/>
        <end position="366"/>
    </location>
</feature>
<feature type="domain" description="KH-like" evidence="1">
    <location>
        <begin position="367"/>
        <end position="451"/>
    </location>
</feature>
<feature type="binding site" evidence="1">
    <location>
        <begin position="8"/>
        <end position="15"/>
    </location>
    <ligand>
        <name>GTP</name>
        <dbReference type="ChEBI" id="CHEBI:37565"/>
        <label>1</label>
    </ligand>
</feature>
<feature type="binding site" evidence="1">
    <location>
        <begin position="55"/>
        <end position="59"/>
    </location>
    <ligand>
        <name>GTP</name>
        <dbReference type="ChEBI" id="CHEBI:37565"/>
        <label>1</label>
    </ligand>
</feature>
<feature type="binding site" evidence="1">
    <location>
        <begin position="116"/>
        <end position="119"/>
    </location>
    <ligand>
        <name>GTP</name>
        <dbReference type="ChEBI" id="CHEBI:37565"/>
        <label>1</label>
    </ligand>
</feature>
<feature type="binding site" evidence="1">
    <location>
        <begin position="201"/>
        <end position="208"/>
    </location>
    <ligand>
        <name>GTP</name>
        <dbReference type="ChEBI" id="CHEBI:37565"/>
        <label>2</label>
    </ligand>
</feature>
<feature type="binding site" evidence="1">
    <location>
        <begin position="248"/>
        <end position="252"/>
    </location>
    <ligand>
        <name>GTP</name>
        <dbReference type="ChEBI" id="CHEBI:37565"/>
        <label>2</label>
    </ligand>
</feature>
<feature type="binding site" evidence="1">
    <location>
        <begin position="312"/>
        <end position="315"/>
    </location>
    <ligand>
        <name>GTP</name>
        <dbReference type="ChEBI" id="CHEBI:37565"/>
        <label>2</label>
    </ligand>
</feature>
<reference key="1">
    <citation type="journal article" date="2007" name="Proc. Natl. Acad. Sci. U.S.A.">
        <title>Deep-sea vent epsilon-proteobacterial genomes provide insights into emergence of pathogens.</title>
        <authorList>
            <person name="Nakagawa S."/>
            <person name="Takaki Y."/>
            <person name="Shimamura S."/>
            <person name="Reysenbach A.-L."/>
            <person name="Takai K."/>
            <person name="Horikoshi K."/>
        </authorList>
    </citation>
    <scope>NUCLEOTIDE SEQUENCE [LARGE SCALE GENOMIC DNA]</scope>
    <source>
        <strain>SB155-2</strain>
    </source>
</reference>
<proteinExistence type="inferred from homology"/>
<gene>
    <name evidence="1" type="primary">der</name>
    <name type="synonym">engA</name>
    <name type="ordered locus">NIS_1369</name>
</gene>
<evidence type="ECO:0000255" key="1">
    <source>
        <dbReference type="HAMAP-Rule" id="MF_00195"/>
    </source>
</evidence>
<dbReference type="EMBL" id="AP009178">
    <property type="protein sequence ID" value="BAF70477.1"/>
    <property type="molecule type" value="Genomic_DNA"/>
</dbReference>
<dbReference type="RefSeq" id="WP_012082740.1">
    <property type="nucleotide sequence ID" value="NC_009662.1"/>
</dbReference>
<dbReference type="SMR" id="A6Q4R8"/>
<dbReference type="FunCoup" id="A6Q4R8">
    <property type="interactions" value="459"/>
</dbReference>
<dbReference type="STRING" id="387092.NIS_1369"/>
<dbReference type="KEGG" id="nis:NIS_1369"/>
<dbReference type="eggNOG" id="COG1160">
    <property type="taxonomic scope" value="Bacteria"/>
</dbReference>
<dbReference type="HOGENOM" id="CLU_016077_6_2_7"/>
<dbReference type="InParanoid" id="A6Q4R8"/>
<dbReference type="OrthoDB" id="9805918at2"/>
<dbReference type="Proteomes" id="UP000001118">
    <property type="component" value="Chromosome"/>
</dbReference>
<dbReference type="GO" id="GO:0005525">
    <property type="term" value="F:GTP binding"/>
    <property type="evidence" value="ECO:0007669"/>
    <property type="project" value="UniProtKB-UniRule"/>
</dbReference>
<dbReference type="GO" id="GO:0043022">
    <property type="term" value="F:ribosome binding"/>
    <property type="evidence" value="ECO:0007669"/>
    <property type="project" value="TreeGrafter"/>
</dbReference>
<dbReference type="GO" id="GO:0042254">
    <property type="term" value="P:ribosome biogenesis"/>
    <property type="evidence" value="ECO:0007669"/>
    <property type="project" value="UniProtKB-KW"/>
</dbReference>
<dbReference type="CDD" id="cd01894">
    <property type="entry name" value="EngA1"/>
    <property type="match status" value="1"/>
</dbReference>
<dbReference type="CDD" id="cd01895">
    <property type="entry name" value="EngA2"/>
    <property type="match status" value="1"/>
</dbReference>
<dbReference type="FunFam" id="3.30.300.20:FF:000004">
    <property type="entry name" value="GTPase Der"/>
    <property type="match status" value="1"/>
</dbReference>
<dbReference type="FunFam" id="3.40.50.300:FF:000040">
    <property type="entry name" value="GTPase Der"/>
    <property type="match status" value="1"/>
</dbReference>
<dbReference type="FunFam" id="3.40.50.300:FF:000494">
    <property type="entry name" value="tRNA modification GTPase MnmE"/>
    <property type="match status" value="1"/>
</dbReference>
<dbReference type="Gene3D" id="3.30.300.20">
    <property type="match status" value="1"/>
</dbReference>
<dbReference type="Gene3D" id="3.40.50.300">
    <property type="entry name" value="P-loop containing nucleotide triphosphate hydrolases"/>
    <property type="match status" value="2"/>
</dbReference>
<dbReference type="HAMAP" id="MF_00195">
    <property type="entry name" value="GTPase_Der"/>
    <property type="match status" value="1"/>
</dbReference>
<dbReference type="InterPro" id="IPR031166">
    <property type="entry name" value="G_ENGA"/>
</dbReference>
<dbReference type="InterPro" id="IPR006073">
    <property type="entry name" value="GTP-bd"/>
</dbReference>
<dbReference type="InterPro" id="IPR016484">
    <property type="entry name" value="GTPase_Der"/>
</dbReference>
<dbReference type="InterPro" id="IPR032859">
    <property type="entry name" value="KH_dom-like"/>
</dbReference>
<dbReference type="InterPro" id="IPR015946">
    <property type="entry name" value="KH_dom-like_a/b"/>
</dbReference>
<dbReference type="InterPro" id="IPR027417">
    <property type="entry name" value="P-loop_NTPase"/>
</dbReference>
<dbReference type="InterPro" id="IPR005225">
    <property type="entry name" value="Small_GTP-bd"/>
</dbReference>
<dbReference type="NCBIfam" id="TIGR03594">
    <property type="entry name" value="GTPase_EngA"/>
    <property type="match status" value="1"/>
</dbReference>
<dbReference type="NCBIfam" id="TIGR00231">
    <property type="entry name" value="small_GTP"/>
    <property type="match status" value="2"/>
</dbReference>
<dbReference type="PANTHER" id="PTHR43834">
    <property type="entry name" value="GTPASE DER"/>
    <property type="match status" value="1"/>
</dbReference>
<dbReference type="PANTHER" id="PTHR43834:SF6">
    <property type="entry name" value="GTPASE DER"/>
    <property type="match status" value="1"/>
</dbReference>
<dbReference type="Pfam" id="PF14714">
    <property type="entry name" value="KH_dom-like"/>
    <property type="match status" value="1"/>
</dbReference>
<dbReference type="Pfam" id="PF01926">
    <property type="entry name" value="MMR_HSR1"/>
    <property type="match status" value="2"/>
</dbReference>
<dbReference type="PIRSF" id="PIRSF006485">
    <property type="entry name" value="GTP-binding_EngA"/>
    <property type="match status" value="1"/>
</dbReference>
<dbReference type="PRINTS" id="PR00326">
    <property type="entry name" value="GTP1OBG"/>
</dbReference>
<dbReference type="SUPFAM" id="SSF52540">
    <property type="entry name" value="P-loop containing nucleoside triphosphate hydrolases"/>
    <property type="match status" value="2"/>
</dbReference>
<dbReference type="PROSITE" id="PS51712">
    <property type="entry name" value="G_ENGA"/>
    <property type="match status" value="2"/>
</dbReference>
<comment type="function">
    <text evidence="1">GTPase that plays an essential role in the late steps of ribosome biogenesis.</text>
</comment>
<comment type="subunit">
    <text evidence="1">Associates with the 50S ribosomal subunit.</text>
</comment>
<comment type="similarity">
    <text evidence="1">Belongs to the TRAFAC class TrmE-Era-EngA-EngB-Septin-like GTPase superfamily. EngA (Der) GTPase family.</text>
</comment>
<accession>A6Q4R8</accession>
<name>DER_NITSB</name>
<sequence length="462" mass="53339">MKKIAIIGKPNVGKSSLFNRILKQRDAIVSETEGTTRDVKRRIVQIGEKEAEILDTGGIEDRNELFEKVKQKSLEAAKDADIILYMVDGKKLPDEEDKQIFRSLQKLGKKIALVINKIDNDKEEENVWNFYEFGTQDIFPISVSHNRKVKRLLDWVEKQLPKKETIKIEIDEELDFDELLAINEGEKKQEESNEINVAILGRVNVGKSSLLNALLKEERSIVSDVAGTTIDTIDESTIYNDKVITFIDTAGIRRRGKIVGIEKYALNRTQKMLERADVALLVLDASEGITEQDERIAGYIDKYKLACIIVLNKWDIAKKSYEEAVKEVRDRFKFLSFAPIITLSAKTRKRVDRLYDLILKVYKNYSTWLPTGQLNRVIKEAQIRHQIPSYKGKPVKILYATQYDTKPPKIALVMNRPEGLHFSYKRYLANVLRENFDLEGTPIILRPRKRGERDEEMEEESY</sequence>
<organism>
    <name type="scientific">Nitratiruptor sp. (strain SB155-2)</name>
    <dbReference type="NCBI Taxonomy" id="387092"/>
    <lineage>
        <taxon>Bacteria</taxon>
        <taxon>Pseudomonadati</taxon>
        <taxon>Campylobacterota</taxon>
        <taxon>Epsilonproteobacteria</taxon>
        <taxon>Nautiliales</taxon>
        <taxon>Nitratiruptoraceae</taxon>
        <taxon>Nitratiruptor</taxon>
    </lineage>
</organism>
<protein>
    <recommendedName>
        <fullName evidence="1">GTPase Der</fullName>
    </recommendedName>
    <alternativeName>
        <fullName evidence="1">GTP-binding protein EngA</fullName>
    </alternativeName>
</protein>
<keyword id="KW-0342">GTP-binding</keyword>
<keyword id="KW-0547">Nucleotide-binding</keyword>
<keyword id="KW-1185">Reference proteome</keyword>
<keyword id="KW-0677">Repeat</keyword>
<keyword id="KW-0690">Ribosome biogenesis</keyword>